<gene>
    <name evidence="1" type="primary">pepQ</name>
    <name type="ordered locus">EcolC_4163</name>
</gene>
<dbReference type="EC" id="3.4.13.9" evidence="1"/>
<dbReference type="EMBL" id="CP000946">
    <property type="protein sequence ID" value="ACA79760.1"/>
    <property type="molecule type" value="Genomic_DNA"/>
</dbReference>
<dbReference type="RefSeq" id="WP_000444561.1">
    <property type="nucleotide sequence ID" value="NZ_MTFT01000015.1"/>
</dbReference>
<dbReference type="SMR" id="B1IW60"/>
<dbReference type="MEROPS" id="M24.003"/>
<dbReference type="GeneID" id="86861950"/>
<dbReference type="KEGG" id="ecl:EcolC_4163"/>
<dbReference type="HOGENOM" id="CLU_050675_0_0_6"/>
<dbReference type="GO" id="GO:0005829">
    <property type="term" value="C:cytosol"/>
    <property type="evidence" value="ECO:0007669"/>
    <property type="project" value="TreeGrafter"/>
</dbReference>
<dbReference type="GO" id="GO:0004177">
    <property type="term" value="F:aminopeptidase activity"/>
    <property type="evidence" value="ECO:0007669"/>
    <property type="project" value="TreeGrafter"/>
</dbReference>
<dbReference type="GO" id="GO:0046872">
    <property type="term" value="F:metal ion binding"/>
    <property type="evidence" value="ECO:0007669"/>
    <property type="project" value="UniProtKB-KW"/>
</dbReference>
<dbReference type="GO" id="GO:0008235">
    <property type="term" value="F:metalloexopeptidase activity"/>
    <property type="evidence" value="ECO:0007669"/>
    <property type="project" value="UniProtKB-UniRule"/>
</dbReference>
<dbReference type="GO" id="GO:0016795">
    <property type="term" value="F:phosphoric triester hydrolase activity"/>
    <property type="evidence" value="ECO:0007669"/>
    <property type="project" value="InterPro"/>
</dbReference>
<dbReference type="GO" id="GO:0102009">
    <property type="term" value="F:proline dipeptidase activity"/>
    <property type="evidence" value="ECO:0007669"/>
    <property type="project" value="UniProtKB-EC"/>
</dbReference>
<dbReference type="GO" id="GO:0006508">
    <property type="term" value="P:proteolysis"/>
    <property type="evidence" value="ECO:0007669"/>
    <property type="project" value="UniProtKB-KW"/>
</dbReference>
<dbReference type="CDD" id="cd01087">
    <property type="entry name" value="Prolidase"/>
    <property type="match status" value="1"/>
</dbReference>
<dbReference type="FunFam" id="3.40.350.10:FF:000002">
    <property type="entry name" value="Xaa-Pro dipeptidase"/>
    <property type="match status" value="1"/>
</dbReference>
<dbReference type="FunFam" id="3.90.230.10:FF:000006">
    <property type="entry name" value="Xaa-Pro dipeptidase"/>
    <property type="match status" value="1"/>
</dbReference>
<dbReference type="Gene3D" id="3.90.230.10">
    <property type="entry name" value="Creatinase/methionine aminopeptidase superfamily"/>
    <property type="match status" value="1"/>
</dbReference>
<dbReference type="Gene3D" id="3.40.350.10">
    <property type="entry name" value="Creatinase/prolidase N-terminal domain"/>
    <property type="match status" value="1"/>
</dbReference>
<dbReference type="HAMAP" id="MF_01279">
    <property type="entry name" value="X_Pro_dipeptid"/>
    <property type="match status" value="1"/>
</dbReference>
<dbReference type="InterPro" id="IPR029149">
    <property type="entry name" value="Creatin/AminoP/Spt16_N"/>
</dbReference>
<dbReference type="InterPro" id="IPR036005">
    <property type="entry name" value="Creatinase/aminopeptidase-like"/>
</dbReference>
<dbReference type="InterPro" id="IPR048819">
    <property type="entry name" value="PepQ_N"/>
</dbReference>
<dbReference type="InterPro" id="IPR000994">
    <property type="entry name" value="Pept_M24"/>
</dbReference>
<dbReference type="InterPro" id="IPR001131">
    <property type="entry name" value="Peptidase_M24B_aminopep-P_CS"/>
</dbReference>
<dbReference type="InterPro" id="IPR052433">
    <property type="entry name" value="X-Pro_dipept-like"/>
</dbReference>
<dbReference type="InterPro" id="IPR022846">
    <property type="entry name" value="X_Pro_dipept"/>
</dbReference>
<dbReference type="NCBIfam" id="NF010133">
    <property type="entry name" value="PRK13607.1"/>
    <property type="match status" value="1"/>
</dbReference>
<dbReference type="PANTHER" id="PTHR43226">
    <property type="entry name" value="XAA-PRO AMINOPEPTIDASE 3"/>
    <property type="match status" value="1"/>
</dbReference>
<dbReference type="PANTHER" id="PTHR43226:SF8">
    <property type="entry name" value="XAA-PRO DIPEPTIDASE"/>
    <property type="match status" value="1"/>
</dbReference>
<dbReference type="Pfam" id="PF21216">
    <property type="entry name" value="PepQ_N"/>
    <property type="match status" value="1"/>
</dbReference>
<dbReference type="Pfam" id="PF00557">
    <property type="entry name" value="Peptidase_M24"/>
    <property type="match status" value="1"/>
</dbReference>
<dbReference type="SUPFAM" id="SSF55920">
    <property type="entry name" value="Creatinase/aminopeptidase"/>
    <property type="match status" value="1"/>
</dbReference>
<dbReference type="PROSITE" id="PS00491">
    <property type="entry name" value="PROLINE_PEPTIDASE"/>
    <property type="match status" value="1"/>
</dbReference>
<comment type="function">
    <text evidence="1">Splits dipeptides with a prolyl residue in the C-terminal position.</text>
</comment>
<comment type="catalytic activity">
    <reaction evidence="1">
        <text>Xaa-L-Pro dipeptide + H2O = an L-alpha-amino acid + L-proline</text>
        <dbReference type="Rhea" id="RHEA:76407"/>
        <dbReference type="ChEBI" id="CHEBI:15377"/>
        <dbReference type="ChEBI" id="CHEBI:59869"/>
        <dbReference type="ChEBI" id="CHEBI:60039"/>
        <dbReference type="ChEBI" id="CHEBI:195196"/>
        <dbReference type="EC" id="3.4.13.9"/>
    </reaction>
</comment>
<comment type="cofactor">
    <cofactor evidence="1">
        <name>Mn(2+)</name>
        <dbReference type="ChEBI" id="CHEBI:29035"/>
    </cofactor>
    <text evidence="1">Binds 2 manganese ions per subunit.</text>
</comment>
<comment type="similarity">
    <text evidence="1">Belongs to the peptidase M24B family. Bacterial-type prolidase subfamily.</text>
</comment>
<sequence length="443" mass="50176">MESLASLYKNHIATLQERTRDALARFKLDALLIHSGELFNVFLDDHPYPFKVNPQFKAWVPVTQVPNCWLLVDGVNKPKLWFYLPVDYWHNVEPLPTSFWTEDVEVIALPKADGIGSLLPAARGNIGYIGPVPERALQLGIEASNINPKGVIDYLHYYRSFKTEYELACMREAQKMAVNGHRAAEEAFRSGMSEFDINIAYLTATGHRDTDVPYSNIVALNEHAAVLHYTKLDHQAPEEMRSFLLDAGAEYNGYAADLTRTWSAKSDNDYAQLVKDVNDEQLALIATMKAGVSYVDYHIQFHQRIAKLLRKHQIITDMSEEAMVENDLTGPFMPHGIGHPLGLQVHDVAGFMQDDSGTHLAAPAKYPYLRCTRILQPGMVLTIEPGIYFIESLLAPWREGQFSKHFNWQKIEALKPFGGIRIEDNVVIHENNVENMTRDLKLA</sequence>
<proteinExistence type="inferred from homology"/>
<feature type="chain" id="PRO_1000085883" description="Xaa-Pro dipeptidase">
    <location>
        <begin position="1"/>
        <end position="443"/>
    </location>
</feature>
<feature type="binding site" evidence="1">
    <location>
        <position position="246"/>
    </location>
    <ligand>
        <name>Mn(2+)</name>
        <dbReference type="ChEBI" id="CHEBI:29035"/>
        <label>2</label>
    </ligand>
</feature>
<feature type="binding site" evidence="1">
    <location>
        <position position="257"/>
    </location>
    <ligand>
        <name>Mn(2+)</name>
        <dbReference type="ChEBI" id="CHEBI:29035"/>
        <label>1</label>
    </ligand>
</feature>
<feature type="binding site" evidence="1">
    <location>
        <position position="257"/>
    </location>
    <ligand>
        <name>Mn(2+)</name>
        <dbReference type="ChEBI" id="CHEBI:29035"/>
        <label>2</label>
    </ligand>
</feature>
<feature type="binding site" evidence="1">
    <location>
        <position position="339"/>
    </location>
    <ligand>
        <name>Mn(2+)</name>
        <dbReference type="ChEBI" id="CHEBI:29035"/>
        <label>1</label>
    </ligand>
</feature>
<feature type="binding site" evidence="1">
    <location>
        <position position="384"/>
    </location>
    <ligand>
        <name>Mn(2+)</name>
        <dbReference type="ChEBI" id="CHEBI:29035"/>
        <label>1</label>
    </ligand>
</feature>
<feature type="binding site" evidence="1">
    <location>
        <position position="423"/>
    </location>
    <ligand>
        <name>Mn(2+)</name>
        <dbReference type="ChEBI" id="CHEBI:29035"/>
        <label>1</label>
    </ligand>
</feature>
<feature type="binding site" evidence="1">
    <location>
        <position position="423"/>
    </location>
    <ligand>
        <name>Mn(2+)</name>
        <dbReference type="ChEBI" id="CHEBI:29035"/>
        <label>2</label>
    </ligand>
</feature>
<name>PEPQ_ECOLC</name>
<protein>
    <recommendedName>
        <fullName evidence="1">Xaa-Pro dipeptidase</fullName>
        <shortName evidence="1">X-Pro dipeptidase</shortName>
        <ecNumber evidence="1">3.4.13.9</ecNumber>
    </recommendedName>
    <alternativeName>
        <fullName evidence="1">Imidodipeptidase</fullName>
    </alternativeName>
    <alternativeName>
        <fullName evidence="1">Proline dipeptidase</fullName>
        <shortName evidence="1">Prolidase</shortName>
    </alternativeName>
</protein>
<accession>B1IW60</accession>
<organism>
    <name type="scientific">Escherichia coli (strain ATCC 8739 / DSM 1576 / NBRC 3972 / NCIMB 8545 / WDCM 00012 / Crooks)</name>
    <dbReference type="NCBI Taxonomy" id="481805"/>
    <lineage>
        <taxon>Bacteria</taxon>
        <taxon>Pseudomonadati</taxon>
        <taxon>Pseudomonadota</taxon>
        <taxon>Gammaproteobacteria</taxon>
        <taxon>Enterobacterales</taxon>
        <taxon>Enterobacteriaceae</taxon>
        <taxon>Escherichia</taxon>
    </lineage>
</organism>
<reference key="1">
    <citation type="submission" date="2008-02" db="EMBL/GenBank/DDBJ databases">
        <title>Complete sequence of Escherichia coli C str. ATCC 8739.</title>
        <authorList>
            <person name="Copeland A."/>
            <person name="Lucas S."/>
            <person name="Lapidus A."/>
            <person name="Glavina del Rio T."/>
            <person name="Dalin E."/>
            <person name="Tice H."/>
            <person name="Bruce D."/>
            <person name="Goodwin L."/>
            <person name="Pitluck S."/>
            <person name="Kiss H."/>
            <person name="Brettin T."/>
            <person name="Detter J.C."/>
            <person name="Han C."/>
            <person name="Kuske C.R."/>
            <person name="Schmutz J."/>
            <person name="Larimer F."/>
            <person name="Land M."/>
            <person name="Hauser L."/>
            <person name="Kyrpides N."/>
            <person name="Mikhailova N."/>
            <person name="Ingram L."/>
            <person name="Richardson P."/>
        </authorList>
    </citation>
    <scope>NUCLEOTIDE SEQUENCE [LARGE SCALE GENOMIC DNA]</scope>
    <source>
        <strain>ATCC 8739 / DSM 1576 / NBRC 3972 / NCIMB 8545 / WDCM 00012 / Crooks</strain>
    </source>
</reference>
<keyword id="KW-0224">Dipeptidase</keyword>
<keyword id="KW-0378">Hydrolase</keyword>
<keyword id="KW-0464">Manganese</keyword>
<keyword id="KW-0479">Metal-binding</keyword>
<keyword id="KW-0482">Metalloprotease</keyword>
<keyword id="KW-0645">Protease</keyword>
<evidence type="ECO:0000255" key="1">
    <source>
        <dbReference type="HAMAP-Rule" id="MF_01279"/>
    </source>
</evidence>